<name>NU1C_PROM2</name>
<accession>A8G2G6</accession>
<gene>
    <name evidence="1" type="primary">ndhA</name>
    <name type="ordered locus">P9215_01781</name>
</gene>
<keyword id="KW-0472">Membrane</keyword>
<keyword id="KW-0520">NAD</keyword>
<keyword id="KW-0521">NADP</keyword>
<keyword id="KW-0618">Plastoquinone</keyword>
<keyword id="KW-0874">Quinone</keyword>
<keyword id="KW-0793">Thylakoid</keyword>
<keyword id="KW-1278">Translocase</keyword>
<keyword id="KW-0812">Transmembrane</keyword>
<keyword id="KW-1133">Transmembrane helix</keyword>
<sequence length="372" mass="40542">MDYGLDLEYSFNEFLKGFGLSSEIAHIIWLPLPMLLVLVAAVVGVLVTVWLERKISAAAQQRIGPEYAGALGVLQPIADGLKLLVKEDIIPAKADGILFTAGPILVLVPVILSWLIVPFGQNLLISNVGIGIFLWIALSSIQPIGLLMSGYASNNKYSLLGGLRAAAQSISYEIPLALSVLAIVLMTNSLSTIDIVNQQSGAGILSWNIWRQPVGFIVFWICALAECERLPFDLPEAEEELVAGYQTEYAGMKFALFYLGSYINLILSALLVSILYLGGWGFPIPVELIAKFLNLPINAPLIQVFTASIGIVMTVLKAYLLVFIAILLRWTTPRVRIDQLLDLGWKFLLPISLANLLITAGLKLAFPQFFGG</sequence>
<comment type="function">
    <text evidence="1">NDH-1 shuttles electrons from an unknown electron donor, via FMN and iron-sulfur (Fe-S) centers, to quinones in the respiratory and/or the photosynthetic chain. The immediate electron acceptor for the enzyme in this species is believed to be plastoquinone. Couples the redox reaction to proton translocation, and thus conserves the redox energy in a proton gradient.</text>
</comment>
<comment type="catalytic activity">
    <reaction evidence="1">
        <text>a plastoquinone + NADH + (n+1) H(+)(in) = a plastoquinol + NAD(+) + n H(+)(out)</text>
        <dbReference type="Rhea" id="RHEA:42608"/>
        <dbReference type="Rhea" id="RHEA-COMP:9561"/>
        <dbReference type="Rhea" id="RHEA-COMP:9562"/>
        <dbReference type="ChEBI" id="CHEBI:15378"/>
        <dbReference type="ChEBI" id="CHEBI:17757"/>
        <dbReference type="ChEBI" id="CHEBI:57540"/>
        <dbReference type="ChEBI" id="CHEBI:57945"/>
        <dbReference type="ChEBI" id="CHEBI:62192"/>
    </reaction>
</comment>
<comment type="catalytic activity">
    <reaction evidence="1">
        <text>a plastoquinone + NADPH + (n+1) H(+)(in) = a plastoquinol + NADP(+) + n H(+)(out)</text>
        <dbReference type="Rhea" id="RHEA:42612"/>
        <dbReference type="Rhea" id="RHEA-COMP:9561"/>
        <dbReference type="Rhea" id="RHEA-COMP:9562"/>
        <dbReference type="ChEBI" id="CHEBI:15378"/>
        <dbReference type="ChEBI" id="CHEBI:17757"/>
        <dbReference type="ChEBI" id="CHEBI:57783"/>
        <dbReference type="ChEBI" id="CHEBI:58349"/>
        <dbReference type="ChEBI" id="CHEBI:62192"/>
    </reaction>
</comment>
<comment type="subunit">
    <text evidence="1">NDH-1 is composed of at least 11 different subunits.</text>
</comment>
<comment type="subcellular location">
    <subcellularLocation>
        <location evidence="1">Cellular thylakoid membrane</location>
        <topology evidence="1">Multi-pass membrane protein</topology>
    </subcellularLocation>
</comment>
<comment type="similarity">
    <text evidence="1">Belongs to the complex I subunit 1 family.</text>
</comment>
<reference key="1">
    <citation type="journal article" date="2007" name="PLoS Genet.">
        <title>Patterns and implications of gene gain and loss in the evolution of Prochlorococcus.</title>
        <authorList>
            <person name="Kettler G.C."/>
            <person name="Martiny A.C."/>
            <person name="Huang K."/>
            <person name="Zucker J."/>
            <person name="Coleman M.L."/>
            <person name="Rodrigue S."/>
            <person name="Chen F."/>
            <person name="Lapidus A."/>
            <person name="Ferriera S."/>
            <person name="Johnson J."/>
            <person name="Steglich C."/>
            <person name="Church G.M."/>
            <person name="Richardson P."/>
            <person name="Chisholm S.W."/>
        </authorList>
    </citation>
    <scope>NUCLEOTIDE SEQUENCE [LARGE SCALE GENOMIC DNA]</scope>
    <source>
        <strain>MIT 9215</strain>
    </source>
</reference>
<protein>
    <recommendedName>
        <fullName evidence="1">NAD(P)H-quinone oxidoreductase subunit 1</fullName>
        <ecNumber evidence="1">7.1.1.-</ecNumber>
    </recommendedName>
    <alternativeName>
        <fullName evidence="1">NAD(P)H dehydrogenase I subunit 1</fullName>
    </alternativeName>
    <alternativeName>
        <fullName evidence="1">NDH-1 subunit 1</fullName>
    </alternativeName>
    <alternativeName>
        <fullName evidence="1">NDH-A</fullName>
    </alternativeName>
</protein>
<dbReference type="EC" id="7.1.1.-" evidence="1"/>
<dbReference type="EMBL" id="CP000825">
    <property type="protein sequence ID" value="ABV49797.1"/>
    <property type="molecule type" value="Genomic_DNA"/>
</dbReference>
<dbReference type="RefSeq" id="WP_002807465.1">
    <property type="nucleotide sequence ID" value="NC_009840.1"/>
</dbReference>
<dbReference type="SMR" id="A8G2G6"/>
<dbReference type="STRING" id="93060.P9215_01781"/>
<dbReference type="KEGG" id="pmh:P9215_01781"/>
<dbReference type="eggNOG" id="COG1005">
    <property type="taxonomic scope" value="Bacteria"/>
</dbReference>
<dbReference type="HOGENOM" id="CLU_015134_0_1_3"/>
<dbReference type="OrthoDB" id="9803734at2"/>
<dbReference type="Proteomes" id="UP000002014">
    <property type="component" value="Chromosome"/>
</dbReference>
<dbReference type="GO" id="GO:0031676">
    <property type="term" value="C:plasma membrane-derived thylakoid membrane"/>
    <property type="evidence" value="ECO:0007669"/>
    <property type="project" value="UniProtKB-SubCell"/>
</dbReference>
<dbReference type="GO" id="GO:0003954">
    <property type="term" value="F:NADH dehydrogenase activity"/>
    <property type="evidence" value="ECO:0007669"/>
    <property type="project" value="TreeGrafter"/>
</dbReference>
<dbReference type="GO" id="GO:0016655">
    <property type="term" value="F:oxidoreductase activity, acting on NAD(P)H, quinone or similar compound as acceptor"/>
    <property type="evidence" value="ECO:0007669"/>
    <property type="project" value="UniProtKB-UniRule"/>
</dbReference>
<dbReference type="GO" id="GO:0048038">
    <property type="term" value="F:quinone binding"/>
    <property type="evidence" value="ECO:0007669"/>
    <property type="project" value="UniProtKB-KW"/>
</dbReference>
<dbReference type="GO" id="GO:0009060">
    <property type="term" value="P:aerobic respiration"/>
    <property type="evidence" value="ECO:0007669"/>
    <property type="project" value="TreeGrafter"/>
</dbReference>
<dbReference type="GO" id="GO:0019684">
    <property type="term" value="P:photosynthesis, light reaction"/>
    <property type="evidence" value="ECO:0007669"/>
    <property type="project" value="UniProtKB-UniRule"/>
</dbReference>
<dbReference type="HAMAP" id="MF_01350">
    <property type="entry name" value="NDH1_NuoH"/>
    <property type="match status" value="1"/>
</dbReference>
<dbReference type="InterPro" id="IPR001694">
    <property type="entry name" value="NADH_UbQ_OxRdtase_su1/FPO"/>
</dbReference>
<dbReference type="InterPro" id="IPR018086">
    <property type="entry name" value="NADH_UbQ_OxRdtase_su1_CS"/>
</dbReference>
<dbReference type="NCBIfam" id="NF004741">
    <property type="entry name" value="PRK06076.1-2"/>
    <property type="match status" value="1"/>
</dbReference>
<dbReference type="NCBIfam" id="NF004744">
    <property type="entry name" value="PRK06076.1-5"/>
    <property type="match status" value="1"/>
</dbReference>
<dbReference type="PANTHER" id="PTHR11432">
    <property type="entry name" value="NADH DEHYDROGENASE SUBUNIT 1"/>
    <property type="match status" value="1"/>
</dbReference>
<dbReference type="PANTHER" id="PTHR11432:SF3">
    <property type="entry name" value="NADH-UBIQUINONE OXIDOREDUCTASE CHAIN 1"/>
    <property type="match status" value="1"/>
</dbReference>
<dbReference type="Pfam" id="PF00146">
    <property type="entry name" value="NADHdh"/>
    <property type="match status" value="1"/>
</dbReference>
<dbReference type="PROSITE" id="PS00667">
    <property type="entry name" value="COMPLEX1_ND1_1"/>
    <property type="match status" value="1"/>
</dbReference>
<dbReference type="PROSITE" id="PS00668">
    <property type="entry name" value="COMPLEX1_ND1_2"/>
    <property type="match status" value="1"/>
</dbReference>
<evidence type="ECO:0000255" key="1">
    <source>
        <dbReference type="HAMAP-Rule" id="MF_01350"/>
    </source>
</evidence>
<organism>
    <name type="scientific">Prochlorococcus marinus (strain MIT 9215)</name>
    <dbReference type="NCBI Taxonomy" id="93060"/>
    <lineage>
        <taxon>Bacteria</taxon>
        <taxon>Bacillati</taxon>
        <taxon>Cyanobacteriota</taxon>
        <taxon>Cyanophyceae</taxon>
        <taxon>Synechococcales</taxon>
        <taxon>Prochlorococcaceae</taxon>
        <taxon>Prochlorococcus</taxon>
    </lineage>
</organism>
<proteinExistence type="inferred from homology"/>
<feature type="chain" id="PRO_1000067750" description="NAD(P)H-quinone oxidoreductase subunit 1">
    <location>
        <begin position="1"/>
        <end position="372"/>
    </location>
</feature>
<feature type="transmembrane region" description="Helical" evidence="1">
    <location>
        <begin position="27"/>
        <end position="47"/>
    </location>
</feature>
<feature type="transmembrane region" description="Helical" evidence="1">
    <location>
        <begin position="97"/>
        <end position="117"/>
    </location>
</feature>
<feature type="transmembrane region" description="Helical" evidence="1">
    <location>
        <begin position="128"/>
        <end position="148"/>
    </location>
</feature>
<feature type="transmembrane region" description="Helical" evidence="1">
    <location>
        <begin position="176"/>
        <end position="196"/>
    </location>
</feature>
<feature type="transmembrane region" description="Helical" evidence="1">
    <location>
        <begin position="204"/>
        <end position="224"/>
    </location>
</feature>
<feature type="transmembrane region" description="Helical" evidence="1">
    <location>
        <begin position="266"/>
        <end position="286"/>
    </location>
</feature>
<feature type="transmembrane region" description="Helical" evidence="1">
    <location>
        <begin position="308"/>
        <end position="328"/>
    </location>
</feature>
<feature type="transmembrane region" description="Helical" evidence="1">
    <location>
        <begin position="347"/>
        <end position="367"/>
    </location>
</feature>